<accession>Q5LD96</accession>
<organism>
    <name type="scientific">Bacteroides fragilis (strain ATCC 25285 / DSM 2151 / CCUG 4856 / JCM 11019 / LMG 10263 / NCTC 9343 / Onslow / VPI 2553 / EN-2)</name>
    <dbReference type="NCBI Taxonomy" id="272559"/>
    <lineage>
        <taxon>Bacteria</taxon>
        <taxon>Pseudomonadati</taxon>
        <taxon>Bacteroidota</taxon>
        <taxon>Bacteroidia</taxon>
        <taxon>Bacteroidales</taxon>
        <taxon>Bacteroidaceae</taxon>
        <taxon>Bacteroides</taxon>
    </lineage>
</organism>
<evidence type="ECO:0000255" key="1">
    <source>
        <dbReference type="HAMAP-Rule" id="MF_00156"/>
    </source>
</evidence>
<sequence length="273" mass="29807">MAGYISDDTRKVTTHRLIEMKQRGEKISMLTSYDYTMAQIVDGAGIDVILVGDSASNVMAGNVTTLPITLDQMIYHGKSVVRGVKRAMVVVDMPFGSYQGNEMEGLASAIRIMKESHADALKLEGGEEIIDTVKRILSAGIPVMGHLGLMPQSINKYGTYTVRAKDDAEAEKLIRDAHLLEEAGCFGLVLEKIPAALASRVASELTIPVIGIGAGGDVDGQVLVIQDMLGMNNGFRPRFLRRYADLYTVMTDAISHYVSDVKNCDFPNEKEQY</sequence>
<comment type="function">
    <text evidence="1">Catalyzes the reversible reaction in which hydroxymethyl group from 5,10-methylenetetrahydrofolate is transferred onto alpha-ketoisovalerate to form ketopantoate.</text>
</comment>
<comment type="catalytic activity">
    <reaction evidence="1">
        <text>3-methyl-2-oxobutanoate + (6R)-5,10-methylene-5,6,7,8-tetrahydrofolate + H2O = 2-dehydropantoate + (6S)-5,6,7,8-tetrahydrofolate</text>
        <dbReference type="Rhea" id="RHEA:11824"/>
        <dbReference type="ChEBI" id="CHEBI:11561"/>
        <dbReference type="ChEBI" id="CHEBI:11851"/>
        <dbReference type="ChEBI" id="CHEBI:15377"/>
        <dbReference type="ChEBI" id="CHEBI:15636"/>
        <dbReference type="ChEBI" id="CHEBI:57453"/>
        <dbReference type="EC" id="2.1.2.11"/>
    </reaction>
</comment>
<comment type="cofactor">
    <cofactor evidence="1">
        <name>Mg(2+)</name>
        <dbReference type="ChEBI" id="CHEBI:18420"/>
    </cofactor>
    <text evidence="1">Binds 1 Mg(2+) ion per subunit.</text>
</comment>
<comment type="pathway">
    <text evidence="1">Cofactor biosynthesis; (R)-pantothenate biosynthesis; (R)-pantoate from 3-methyl-2-oxobutanoate: step 1/2.</text>
</comment>
<comment type="subunit">
    <text evidence="1">Homodecamer; pentamer of dimers.</text>
</comment>
<comment type="subcellular location">
    <subcellularLocation>
        <location evidence="1">Cytoplasm</location>
    </subcellularLocation>
</comment>
<comment type="similarity">
    <text evidence="1">Belongs to the PanB family.</text>
</comment>
<reference key="1">
    <citation type="journal article" date="2005" name="Science">
        <title>Extensive DNA inversions in the B. fragilis genome control variable gene expression.</title>
        <authorList>
            <person name="Cerdeno-Tarraga A.-M."/>
            <person name="Patrick S."/>
            <person name="Crossman L.C."/>
            <person name="Blakely G."/>
            <person name="Abratt V."/>
            <person name="Lennard N."/>
            <person name="Poxton I."/>
            <person name="Duerden B."/>
            <person name="Harris B."/>
            <person name="Quail M.A."/>
            <person name="Barron A."/>
            <person name="Clark L."/>
            <person name="Corton C."/>
            <person name="Doggett J."/>
            <person name="Holden M.T.G."/>
            <person name="Larke N."/>
            <person name="Line A."/>
            <person name="Lord A."/>
            <person name="Norbertczak H."/>
            <person name="Ormond D."/>
            <person name="Price C."/>
            <person name="Rabbinowitsch E."/>
            <person name="Woodward J."/>
            <person name="Barrell B.G."/>
            <person name="Parkhill J."/>
        </authorList>
    </citation>
    <scope>NUCLEOTIDE SEQUENCE [LARGE SCALE GENOMIC DNA]</scope>
    <source>
        <strain>ATCC 25285 / DSM 2151 / CCUG 4856 / JCM 11019 / LMG 10263 / NCTC 9343 / Onslow / VPI 2553 / EN-2</strain>
    </source>
</reference>
<gene>
    <name evidence="1" type="primary">panB</name>
    <name type="ordered locus">BF2220</name>
</gene>
<proteinExistence type="inferred from homology"/>
<keyword id="KW-0963">Cytoplasm</keyword>
<keyword id="KW-0460">Magnesium</keyword>
<keyword id="KW-0479">Metal-binding</keyword>
<keyword id="KW-0566">Pantothenate biosynthesis</keyword>
<keyword id="KW-0808">Transferase</keyword>
<feature type="chain" id="PRO_0000297222" description="3-methyl-2-oxobutanoate hydroxymethyltransferase">
    <location>
        <begin position="1"/>
        <end position="273"/>
    </location>
</feature>
<feature type="active site" description="Proton acceptor" evidence="1">
    <location>
        <position position="191"/>
    </location>
</feature>
<feature type="binding site" evidence="1">
    <location>
        <begin position="53"/>
        <end position="54"/>
    </location>
    <ligand>
        <name>3-methyl-2-oxobutanoate</name>
        <dbReference type="ChEBI" id="CHEBI:11851"/>
    </ligand>
</feature>
<feature type="binding site" evidence="1">
    <location>
        <position position="53"/>
    </location>
    <ligand>
        <name>Mg(2+)</name>
        <dbReference type="ChEBI" id="CHEBI:18420"/>
    </ligand>
</feature>
<feature type="binding site" evidence="1">
    <location>
        <position position="92"/>
    </location>
    <ligand>
        <name>3-methyl-2-oxobutanoate</name>
        <dbReference type="ChEBI" id="CHEBI:11851"/>
    </ligand>
</feature>
<feature type="binding site" evidence="1">
    <location>
        <position position="92"/>
    </location>
    <ligand>
        <name>Mg(2+)</name>
        <dbReference type="ChEBI" id="CHEBI:18420"/>
    </ligand>
</feature>
<feature type="binding site" evidence="1">
    <location>
        <position position="122"/>
    </location>
    <ligand>
        <name>3-methyl-2-oxobutanoate</name>
        <dbReference type="ChEBI" id="CHEBI:11851"/>
    </ligand>
</feature>
<feature type="binding site" evidence="1">
    <location>
        <position position="124"/>
    </location>
    <ligand>
        <name>Mg(2+)</name>
        <dbReference type="ChEBI" id="CHEBI:18420"/>
    </ligand>
</feature>
<name>PANB_BACFN</name>
<dbReference type="EC" id="2.1.2.11" evidence="1"/>
<dbReference type="EMBL" id="CR626927">
    <property type="protein sequence ID" value="CAH07914.1"/>
    <property type="molecule type" value="Genomic_DNA"/>
</dbReference>
<dbReference type="RefSeq" id="WP_005787461.1">
    <property type="nucleotide sequence ID" value="NZ_UFTH01000001.1"/>
</dbReference>
<dbReference type="SMR" id="Q5LD96"/>
<dbReference type="PaxDb" id="272559-BF9343_2133"/>
<dbReference type="GeneID" id="60367359"/>
<dbReference type="KEGG" id="bfs:BF9343_2133"/>
<dbReference type="eggNOG" id="COG0413">
    <property type="taxonomic scope" value="Bacteria"/>
</dbReference>
<dbReference type="HOGENOM" id="CLU_036645_1_0_10"/>
<dbReference type="UniPathway" id="UPA00028">
    <property type="reaction ID" value="UER00003"/>
</dbReference>
<dbReference type="Proteomes" id="UP000006731">
    <property type="component" value="Chromosome"/>
</dbReference>
<dbReference type="GO" id="GO:0005737">
    <property type="term" value="C:cytoplasm"/>
    <property type="evidence" value="ECO:0007669"/>
    <property type="project" value="UniProtKB-SubCell"/>
</dbReference>
<dbReference type="GO" id="GO:0003864">
    <property type="term" value="F:3-methyl-2-oxobutanoate hydroxymethyltransferase activity"/>
    <property type="evidence" value="ECO:0007669"/>
    <property type="project" value="UniProtKB-UniRule"/>
</dbReference>
<dbReference type="GO" id="GO:0000287">
    <property type="term" value="F:magnesium ion binding"/>
    <property type="evidence" value="ECO:0007669"/>
    <property type="project" value="TreeGrafter"/>
</dbReference>
<dbReference type="GO" id="GO:0015940">
    <property type="term" value="P:pantothenate biosynthetic process"/>
    <property type="evidence" value="ECO:0007669"/>
    <property type="project" value="UniProtKB-UniRule"/>
</dbReference>
<dbReference type="CDD" id="cd06557">
    <property type="entry name" value="KPHMT-like"/>
    <property type="match status" value="1"/>
</dbReference>
<dbReference type="FunFam" id="3.20.20.60:FF:000017">
    <property type="entry name" value="3-methyl-2-oxobutanoate hydroxymethyltransferase"/>
    <property type="match status" value="1"/>
</dbReference>
<dbReference type="Gene3D" id="3.20.20.60">
    <property type="entry name" value="Phosphoenolpyruvate-binding domains"/>
    <property type="match status" value="1"/>
</dbReference>
<dbReference type="HAMAP" id="MF_00156">
    <property type="entry name" value="PanB"/>
    <property type="match status" value="1"/>
</dbReference>
<dbReference type="InterPro" id="IPR003700">
    <property type="entry name" value="Pantoate_hydroxy_MeTrfase"/>
</dbReference>
<dbReference type="InterPro" id="IPR015813">
    <property type="entry name" value="Pyrv/PenolPyrv_kinase-like_dom"/>
</dbReference>
<dbReference type="InterPro" id="IPR040442">
    <property type="entry name" value="Pyrv_kinase-like_dom_sf"/>
</dbReference>
<dbReference type="NCBIfam" id="TIGR00222">
    <property type="entry name" value="panB"/>
    <property type="match status" value="1"/>
</dbReference>
<dbReference type="NCBIfam" id="NF001452">
    <property type="entry name" value="PRK00311.1"/>
    <property type="match status" value="1"/>
</dbReference>
<dbReference type="PANTHER" id="PTHR20881">
    <property type="entry name" value="3-METHYL-2-OXOBUTANOATE HYDROXYMETHYLTRANSFERASE"/>
    <property type="match status" value="1"/>
</dbReference>
<dbReference type="PANTHER" id="PTHR20881:SF0">
    <property type="entry name" value="3-METHYL-2-OXOBUTANOATE HYDROXYMETHYLTRANSFERASE"/>
    <property type="match status" value="1"/>
</dbReference>
<dbReference type="Pfam" id="PF02548">
    <property type="entry name" value="Pantoate_transf"/>
    <property type="match status" value="1"/>
</dbReference>
<dbReference type="PIRSF" id="PIRSF000388">
    <property type="entry name" value="Pantoate_hydroxy_MeTrfase"/>
    <property type="match status" value="1"/>
</dbReference>
<dbReference type="SUPFAM" id="SSF51621">
    <property type="entry name" value="Phosphoenolpyruvate/pyruvate domain"/>
    <property type="match status" value="1"/>
</dbReference>
<protein>
    <recommendedName>
        <fullName evidence="1">3-methyl-2-oxobutanoate hydroxymethyltransferase</fullName>
        <ecNumber evidence="1">2.1.2.11</ecNumber>
    </recommendedName>
    <alternativeName>
        <fullName evidence="1">Ketopantoate hydroxymethyltransferase</fullName>
        <shortName evidence="1">KPHMT</shortName>
    </alternativeName>
</protein>